<comment type="function">
    <text evidence="1">IF-3 binds to the 30S ribosomal subunit and shifts the equilibrium between 70S ribosomes and their 50S and 30S subunits in favor of the free subunits, thus enhancing the availability of 30S subunits on which protein synthesis initiation begins.</text>
</comment>
<comment type="subunit">
    <text evidence="1">Monomer.</text>
</comment>
<comment type="subcellular location">
    <subcellularLocation>
        <location evidence="1">Cytoplasm</location>
    </subcellularLocation>
</comment>
<comment type="similarity">
    <text evidence="1">Belongs to the IF-3 family.</text>
</comment>
<dbReference type="EMBL" id="CP000920">
    <property type="protein sequence ID" value="ACO20730.1"/>
    <property type="molecule type" value="Genomic_DNA"/>
</dbReference>
<dbReference type="SMR" id="C1CK40"/>
<dbReference type="KEGG" id="spp:SPP_0965"/>
<dbReference type="HOGENOM" id="CLU_054919_3_2_9"/>
<dbReference type="GO" id="GO:0005829">
    <property type="term" value="C:cytosol"/>
    <property type="evidence" value="ECO:0007669"/>
    <property type="project" value="TreeGrafter"/>
</dbReference>
<dbReference type="GO" id="GO:0016020">
    <property type="term" value="C:membrane"/>
    <property type="evidence" value="ECO:0007669"/>
    <property type="project" value="TreeGrafter"/>
</dbReference>
<dbReference type="GO" id="GO:0043022">
    <property type="term" value="F:ribosome binding"/>
    <property type="evidence" value="ECO:0007669"/>
    <property type="project" value="TreeGrafter"/>
</dbReference>
<dbReference type="GO" id="GO:0003743">
    <property type="term" value="F:translation initiation factor activity"/>
    <property type="evidence" value="ECO:0007669"/>
    <property type="project" value="UniProtKB-UniRule"/>
</dbReference>
<dbReference type="GO" id="GO:0032790">
    <property type="term" value="P:ribosome disassembly"/>
    <property type="evidence" value="ECO:0007669"/>
    <property type="project" value="TreeGrafter"/>
</dbReference>
<dbReference type="FunFam" id="3.10.20.80:FF:000001">
    <property type="entry name" value="Translation initiation factor IF-3"/>
    <property type="match status" value="1"/>
</dbReference>
<dbReference type="FunFam" id="3.30.110.10:FF:000001">
    <property type="entry name" value="Translation initiation factor IF-3"/>
    <property type="match status" value="1"/>
</dbReference>
<dbReference type="Gene3D" id="3.30.110.10">
    <property type="entry name" value="Translation initiation factor 3 (IF-3), C-terminal domain"/>
    <property type="match status" value="1"/>
</dbReference>
<dbReference type="Gene3D" id="3.10.20.80">
    <property type="entry name" value="Translation initiation factor 3 (IF-3), N-terminal domain"/>
    <property type="match status" value="1"/>
</dbReference>
<dbReference type="HAMAP" id="MF_00080">
    <property type="entry name" value="IF_3"/>
    <property type="match status" value="1"/>
</dbReference>
<dbReference type="InterPro" id="IPR036788">
    <property type="entry name" value="T_IF-3_C_sf"/>
</dbReference>
<dbReference type="InterPro" id="IPR036787">
    <property type="entry name" value="T_IF-3_N_sf"/>
</dbReference>
<dbReference type="InterPro" id="IPR019813">
    <property type="entry name" value="Translation_initiation_fac3_CS"/>
</dbReference>
<dbReference type="InterPro" id="IPR001288">
    <property type="entry name" value="Translation_initiation_fac_3"/>
</dbReference>
<dbReference type="InterPro" id="IPR019815">
    <property type="entry name" value="Translation_initiation_fac_3_C"/>
</dbReference>
<dbReference type="InterPro" id="IPR019814">
    <property type="entry name" value="Translation_initiation_fac_3_N"/>
</dbReference>
<dbReference type="NCBIfam" id="TIGR00168">
    <property type="entry name" value="infC"/>
    <property type="match status" value="1"/>
</dbReference>
<dbReference type="PANTHER" id="PTHR10938">
    <property type="entry name" value="TRANSLATION INITIATION FACTOR IF-3"/>
    <property type="match status" value="1"/>
</dbReference>
<dbReference type="PANTHER" id="PTHR10938:SF0">
    <property type="entry name" value="TRANSLATION INITIATION FACTOR IF-3, MITOCHONDRIAL"/>
    <property type="match status" value="1"/>
</dbReference>
<dbReference type="Pfam" id="PF00707">
    <property type="entry name" value="IF3_C"/>
    <property type="match status" value="1"/>
</dbReference>
<dbReference type="Pfam" id="PF05198">
    <property type="entry name" value="IF3_N"/>
    <property type="match status" value="1"/>
</dbReference>
<dbReference type="SUPFAM" id="SSF55200">
    <property type="entry name" value="Translation initiation factor IF3, C-terminal domain"/>
    <property type="match status" value="1"/>
</dbReference>
<dbReference type="SUPFAM" id="SSF54364">
    <property type="entry name" value="Translation initiation factor IF3, N-terminal domain"/>
    <property type="match status" value="1"/>
</dbReference>
<dbReference type="PROSITE" id="PS00938">
    <property type="entry name" value="IF3"/>
    <property type="match status" value="1"/>
</dbReference>
<organism>
    <name type="scientific">Streptococcus pneumoniae (strain P1031)</name>
    <dbReference type="NCBI Taxonomy" id="488223"/>
    <lineage>
        <taxon>Bacteria</taxon>
        <taxon>Bacillati</taxon>
        <taxon>Bacillota</taxon>
        <taxon>Bacilli</taxon>
        <taxon>Lactobacillales</taxon>
        <taxon>Streptococcaceae</taxon>
        <taxon>Streptococcus</taxon>
    </lineage>
</organism>
<proteinExistence type="inferred from homology"/>
<name>IF3_STRZP</name>
<keyword id="KW-0963">Cytoplasm</keyword>
<keyword id="KW-0396">Initiation factor</keyword>
<keyword id="KW-0648">Protein biosynthesis</keyword>
<gene>
    <name evidence="1" type="primary">infC</name>
    <name type="ordered locus">SPP_0965</name>
</gene>
<sequence length="185" mass="21165">MFFSNKTKEVKTIAKQDLFINDEIRVREVRLIGLEGEQLGIKPLSEAQALADNANVDLVLIQPQAKPPVAKIMDYGKFKFEYQKKQKEQRKKQSVVTVKEVRLSPTIDKGDFDTKLRNARKFLEKGNKVKVSIRFKGRMITHKEIGAKVLAEFAEATQDIAIIEQRAKMDGRQMFMQLAPATDKK</sequence>
<accession>C1CK40</accession>
<evidence type="ECO:0000255" key="1">
    <source>
        <dbReference type="HAMAP-Rule" id="MF_00080"/>
    </source>
</evidence>
<feature type="chain" id="PRO_1000190847" description="Translation initiation factor IF-3">
    <location>
        <begin position="1"/>
        <end position="185"/>
    </location>
</feature>
<protein>
    <recommendedName>
        <fullName evidence="1">Translation initiation factor IF-3</fullName>
    </recommendedName>
</protein>
<reference key="1">
    <citation type="journal article" date="2010" name="Genome Biol.">
        <title>Structure and dynamics of the pan-genome of Streptococcus pneumoniae and closely related species.</title>
        <authorList>
            <person name="Donati C."/>
            <person name="Hiller N.L."/>
            <person name="Tettelin H."/>
            <person name="Muzzi A."/>
            <person name="Croucher N.J."/>
            <person name="Angiuoli S.V."/>
            <person name="Oggioni M."/>
            <person name="Dunning Hotopp J.C."/>
            <person name="Hu F.Z."/>
            <person name="Riley D.R."/>
            <person name="Covacci A."/>
            <person name="Mitchell T.J."/>
            <person name="Bentley S.D."/>
            <person name="Kilian M."/>
            <person name="Ehrlich G.D."/>
            <person name="Rappuoli R."/>
            <person name="Moxon E.R."/>
            <person name="Masignani V."/>
        </authorList>
    </citation>
    <scope>NUCLEOTIDE SEQUENCE [LARGE SCALE GENOMIC DNA]</scope>
    <source>
        <strain>P1031</strain>
    </source>
</reference>